<keyword id="KW-0007">Acetylation</keyword>
<keyword id="KW-0025">Alternative splicing</keyword>
<keyword id="KW-0067">ATP-binding</keyword>
<keyword id="KW-0235">DNA replication</keyword>
<keyword id="KW-0238">DNA-binding</keyword>
<keyword id="KW-0244">Early protein</keyword>
<keyword id="KW-1078">G1/S host cell cycle checkpoint dysregulation by virus</keyword>
<keyword id="KW-0347">Helicase</keyword>
<keyword id="KW-1048">Host nucleus</keyword>
<keyword id="KW-0945">Host-virus interaction</keyword>
<keyword id="KW-0378">Hydrolase</keyword>
<keyword id="KW-1090">Inhibition of host innate immune response by virus</keyword>
<keyword id="KW-1114">Inhibition of host interferon signaling pathway by virus</keyword>
<keyword id="KW-1096">Inhibition of host JAK1 by virus</keyword>
<keyword id="KW-0922">Interferon antiviral system evasion</keyword>
<keyword id="KW-0413">Isomerase</keyword>
<keyword id="KW-0460">Magnesium</keyword>
<keyword id="KW-0479">Metal-binding</keyword>
<keyword id="KW-1121">Modulation of host cell cycle by virus</keyword>
<keyword id="KW-0547">Nucleotide-binding</keyword>
<keyword id="KW-0553">Oncogene</keyword>
<keyword id="KW-0597">Phosphoprotein</keyword>
<keyword id="KW-0899">Viral immunoevasion</keyword>
<keyword id="KW-0862">Zinc</keyword>
<keyword id="KW-0863">Zinc-finger</keyword>
<name>LT_POVMC</name>
<organism>
    <name type="scientific">Murine polyomavirus (strain Crawford small-plaque)</name>
    <name type="common">MPyV</name>
    <dbReference type="NCBI Taxonomy" id="10637"/>
    <lineage>
        <taxon>Viruses</taxon>
        <taxon>Monodnaviria</taxon>
        <taxon>Shotokuvirae</taxon>
        <taxon>Cossaviricota</taxon>
        <taxon>Papovaviricetes</taxon>
        <taxon>Sepolyvirales</taxon>
        <taxon>Polyomaviridae</taxon>
        <taxon>Alphapolyomavirus</taxon>
        <taxon>Mus musculus polyomavirus 1</taxon>
    </lineage>
</organism>
<evidence type="ECO:0000250" key="1">
    <source>
        <dbReference type="UniProtKB" id="P03070"/>
    </source>
</evidence>
<evidence type="ECO:0000255" key="2">
    <source>
        <dbReference type="PROSITE-ProRule" id="PRU00551"/>
    </source>
</evidence>
<evidence type="ECO:0000255" key="3">
    <source>
        <dbReference type="PROSITE-ProRule" id="PRU00620"/>
    </source>
</evidence>
<evidence type="ECO:0000255" key="4">
    <source>
        <dbReference type="PROSITE-ProRule" id="PRU00671"/>
    </source>
</evidence>
<evidence type="ECO:0000256" key="5">
    <source>
        <dbReference type="SAM" id="MobiDB-lite"/>
    </source>
</evidence>
<evidence type="ECO:0000305" key="6"/>
<reference key="1">
    <citation type="journal article" date="1983" name="J. Virol.">
        <title>Comparison of the DNA sequence of the Crawford small-plaque variant of polyomavirus with those of polyomaviruses A2 and strain 3.</title>
        <authorList>
            <person name="Rothwell V.M."/>
            <person name="Folk W.R."/>
        </authorList>
    </citation>
    <scope>NUCLEOTIDE SEQUENCE [GENOMIC DNA]</scope>
</reference>
<reference key="2">
    <citation type="submission" date="1985-11" db="EMBL/GenBank/DDBJ databases">
        <authorList>
            <person name="Rothwell V.M."/>
        </authorList>
    </citation>
    <scope>SEQUENCE REVISION</scope>
</reference>
<proteinExistence type="inferred from homology"/>
<protein>
    <recommendedName>
        <fullName>Large T antigen</fullName>
        <shortName>LT</shortName>
        <shortName>LT-AG</shortName>
        <ecNumber evidence="1">5.6.2.4</ecNumber>
    </recommendedName>
    <alternativeName>
        <fullName evidence="6">DNA 3'-5' helicase large T antigen</fullName>
    </alternativeName>
</protein>
<sequence>MDRVLSRADKERLLELLKLPRQLWGDFGRMQQAYKQQSLLLHPDKGGSHALMQELNSLWGTFKTEVYNLRMNLGGTGFQNAERGTEESGHSPLHDDYWSFSYGSKYFTREWNDFFRKWDPSYQSPPKTAESSEQPDLFCYEEPLLSPNPSPPTDTPAHPAGRRRNPCVAEPDDSISPDPPRTPVSRKRPRPAGATGGGGGGVHANGGSVFGHPTGGTSTPAHPPPYHSQGGSESMGGSDSSGFAEGSFRSDPRGESENESYSQSCSQSSFNATPPKKAREDPAPSDFPSSLTGYLSHAIYSNKTFPAFLVYSTKEKCKQLYDTIGKFRPEFKCLVHYEEGGMLFFLTMTKHRVSAVKNYCSKLCSVSFLMCKAVTKPMECYQVVTAAPFQLITENKPGLHQFEFTDEPEEQKAVDWIMVADFALENNLDDPLLIMGYYLDFAKEVPSCIKCSKEETRLQIHWKNHRKHAENADLFLNCKAQKTICQQAADGVLASRRLKLVECTRSQLLKERLQQSLLRLKELGSSDALLYLAGVAWYQCLLEDFPQTLFKMLKLLTENVPKRRNILFRGPVNSGKTGLAAALISLLGGKSLNINCPADKLAFELGVAQDQFVVCFEDVKGQIALNKQLQPGMGVANLDNLRDYLDGSVKVNLEKKHSNKRSQLFPPCVCTMNEYLLPQTVWARFHMVLDFTCKPHLAQALEKCEFLQRERIIQSGDTLALLLIWNFTSDVFDPDIQGLVKEVRDQFAAECSYSLFCDILCNVQEGDDPLKDICEYS</sequence>
<accession>P12905</accession>
<organismHost>
    <name type="scientific">Mus musculus</name>
    <name type="common">Mouse</name>
    <dbReference type="NCBI Taxonomy" id="10090"/>
</organismHost>
<comment type="function">
    <text evidence="1">Isoform large T antigen is a key early protein essential for both driving viral replication and inducing cellular transformation. Plays a role in viral genome replication by driving entry of quiescent cells into the cell cycle and by autoregulating the synthesis of viral early mRNA. Displays highly oncogenic activities by corrupting the host cellular checkpoint mechanisms that guard cell division and the transcription, replication, and repair of DNA. Participates in the modulation of cellular gene expression preceeding viral DNA replication. This step involves binding to host key cell cycle regulators retinoblastoma protein RB1/pRb and TP53. Induces the disassembly of host E2F1 transcription factors from RB1, thus promoting transcriptional activation of E2F1-regulated S-phase genes. Inhibits host TP53 binding to DNA, abrogating the ability of TP53 to stimulate gene expression. Plays the role of a TFIID-associated factor (TAF) in transcription initiation for all three RNA polymerases, by stabilizing the TBP-TFIIA complex on promoters. Initiates viral DNA replication and unwinding via interactions with the viral origin of replication. Binds two adjacent sites in the SV40 origin. The replication fork movement is facilitated by Large T antigen helicase activity. Has processive 3'-5' DNA helicase activity which requires a short 3' single-stranded region and ATP. Activates the transcription of viral late mRNA, through host TBP and TFIIA stabilization. Interferes with histone deacetylation mediated by HDAC1, leading to activation of transcription.</text>
</comment>
<comment type="catalytic activity">
    <reaction evidence="1">
        <text>Couples ATP hydrolysis with the unwinding of duplex DNA by translocating in the 3'-5' direction.</text>
        <dbReference type="EC" id="5.6.2.4"/>
    </reaction>
</comment>
<comment type="catalytic activity">
    <reaction evidence="1">
        <text>ATP + H2O = ADP + phosphate + H(+)</text>
        <dbReference type="Rhea" id="RHEA:13065"/>
        <dbReference type="ChEBI" id="CHEBI:15377"/>
        <dbReference type="ChEBI" id="CHEBI:15378"/>
        <dbReference type="ChEBI" id="CHEBI:30616"/>
        <dbReference type="ChEBI" id="CHEBI:43474"/>
        <dbReference type="ChEBI" id="CHEBI:456216"/>
        <dbReference type="EC" id="5.6.2.4"/>
    </reaction>
</comment>
<comment type="cofactor">
    <cofactor evidence="1">
        <name>Mg(2+)</name>
        <dbReference type="ChEBI" id="CHEBI:18420"/>
    </cofactor>
    <text evidence="1">DNA helicase activity requires Mg(2+).</text>
</comment>
<comment type="subunit">
    <text evidence="1">Forms homohexamers in the presence of ATP. Interacts with host HDAC1. Interacts (via LXCXE domain) with host RB1; the interaction induces the aberrant dissociation of RB1-E2F1 complex thereby disrupting RB1's activity. Interacts (via LXCXE domain) with host pRB-related proteins RBL1 and RBL2. Interacts (via C-terminus) with host TOP1 and POLA1 allowing DNA replication. Interacts with host preinitiation complex components TBP, TFIIA and TFIID to regulate transcription initiation (By similarity).</text>
</comment>
<comment type="subcellular location">
    <subcellularLocation>
        <location evidence="1">Host nucleus</location>
    </subcellularLocation>
</comment>
<comment type="alternative products">
    <event type="alternative splicing"/>
    <isoform>
        <id>P12905-1</id>
        <name>Large T antigen</name>
        <sequence type="displayed"/>
    </isoform>
    <isoform>
        <id>P12906-1</id>
        <name>Middle T antigen</name>
        <sequence type="external"/>
    </isoform>
    <isoform>
        <id>P0C567-1</id>
        <name>Small t antigen</name>
        <sequence type="external"/>
    </isoform>
</comment>
<comment type="domain">
    <text evidence="1">The J domain is essential for multiple viral activities, including virion assembly, viral DNA replication, transformation and transcriptional activation.</text>
</comment>
<comment type="domain">
    <text evidence="1">The LXCXE motif specifically binds to host pRB, RBL1, and RBL2.</text>
</comment>
<comment type="domain">
    <text evidence="1">The zinc finger region contributes to protein-protein interactions essential for the assembly of stable T-antigen hexamers at the origin of replication. The hexamers are required for subsequent alterations in the structure of origin DNA.</text>
</comment>
<comment type="domain">
    <text evidence="1">The ATP binding/ATPase domain is required for proper hexamer assembly and helicase activity.</text>
</comment>
<comment type="PTM">
    <text evidence="1">Phosphorylated on both serine and threonine residues. Small t antigen inhibits the dephosphorylation by the AC form of PP2A.</text>
</comment>
<comment type="PTM">
    <text evidence="1">O-Glycosylated near the C-terminal region.</text>
</comment>
<comment type="PTM">
    <text evidence="1">Acetylated by CBP in a TP53-dependent manner.</text>
</comment>
<dbReference type="EC" id="5.6.2.4" evidence="1"/>
<dbReference type="EMBL" id="K02737">
    <property type="status" value="NOT_ANNOTATED_CDS"/>
    <property type="molecule type" value="Genomic_DNA"/>
</dbReference>
<dbReference type="PIR" id="A28838">
    <property type="entry name" value="TVVPCP"/>
</dbReference>
<dbReference type="BMRB" id="P12905"/>
<dbReference type="SMR" id="P12905"/>
<dbReference type="Proteomes" id="UP000008480">
    <property type="component" value="Segment"/>
</dbReference>
<dbReference type="GO" id="GO:0042025">
    <property type="term" value="C:host cell nucleus"/>
    <property type="evidence" value="ECO:0007669"/>
    <property type="project" value="UniProtKB-SubCell"/>
</dbReference>
<dbReference type="GO" id="GO:0005524">
    <property type="term" value="F:ATP binding"/>
    <property type="evidence" value="ECO:0007669"/>
    <property type="project" value="UniProtKB-KW"/>
</dbReference>
<dbReference type="GO" id="GO:0016887">
    <property type="term" value="F:ATP hydrolysis activity"/>
    <property type="evidence" value="ECO:0007669"/>
    <property type="project" value="RHEA"/>
</dbReference>
<dbReference type="GO" id="GO:0003688">
    <property type="term" value="F:DNA replication origin binding"/>
    <property type="evidence" value="ECO:0007669"/>
    <property type="project" value="InterPro"/>
</dbReference>
<dbReference type="GO" id="GO:0004386">
    <property type="term" value="F:helicase activity"/>
    <property type="evidence" value="ECO:0007669"/>
    <property type="project" value="UniProtKB-KW"/>
</dbReference>
<dbReference type="GO" id="GO:0008270">
    <property type="term" value="F:zinc ion binding"/>
    <property type="evidence" value="ECO:0007669"/>
    <property type="project" value="UniProtKB-KW"/>
</dbReference>
<dbReference type="GO" id="GO:0006260">
    <property type="term" value="P:DNA replication"/>
    <property type="evidence" value="ECO:0007669"/>
    <property type="project" value="UniProtKB-KW"/>
</dbReference>
<dbReference type="GO" id="GO:0039645">
    <property type="term" value="P:symbiont-mediated perturbation of host cell cycle G1/S transition checkpoint"/>
    <property type="evidence" value="ECO:0007669"/>
    <property type="project" value="UniProtKB-KW"/>
</dbReference>
<dbReference type="GO" id="GO:0052170">
    <property type="term" value="P:symbiont-mediated suppression of host innate immune response"/>
    <property type="evidence" value="ECO:0007669"/>
    <property type="project" value="UniProtKB-KW"/>
</dbReference>
<dbReference type="GO" id="GO:0039576">
    <property type="term" value="P:symbiont-mediated suppression of host JAK-STAT cascade via inhibition of JAK1 activity"/>
    <property type="evidence" value="ECO:0007669"/>
    <property type="project" value="UniProtKB-KW"/>
</dbReference>
<dbReference type="GO" id="GO:0039502">
    <property type="term" value="P:symbiont-mediated suppression of host type I interferon-mediated signaling pathway"/>
    <property type="evidence" value="ECO:0007669"/>
    <property type="project" value="UniProtKB-KW"/>
</dbReference>
<dbReference type="Gene3D" id="3.40.1310.20">
    <property type="match status" value="1"/>
</dbReference>
<dbReference type="Gene3D" id="1.10.287.110">
    <property type="entry name" value="DnaJ domain"/>
    <property type="match status" value="1"/>
</dbReference>
<dbReference type="Gene3D" id="1.20.1050.70">
    <property type="entry name" value="Large T antigen, SV40, domain 3"/>
    <property type="match status" value="1"/>
</dbReference>
<dbReference type="Gene3D" id="3.40.50.300">
    <property type="entry name" value="P-loop containing nucleotide triphosphate hydrolases"/>
    <property type="match status" value="1"/>
</dbReference>
<dbReference type="Gene3D" id="1.10.10.510">
    <property type="entry name" value="Zinc finger, large T-antigen D1 domain"/>
    <property type="match status" value="1"/>
</dbReference>
<dbReference type="InterPro" id="IPR001623">
    <property type="entry name" value="DnaJ_domain"/>
</dbReference>
<dbReference type="InterPro" id="IPR014015">
    <property type="entry name" value="Helicase_SF3_DNA-vir"/>
</dbReference>
<dbReference type="InterPro" id="IPR036869">
    <property type="entry name" value="J_dom_sf"/>
</dbReference>
<dbReference type="InterPro" id="IPR010932">
    <property type="entry name" value="Lg_T_Ag_Polyomavir_C"/>
</dbReference>
<dbReference type="InterPro" id="IPR027417">
    <property type="entry name" value="P-loop_NTPase"/>
</dbReference>
<dbReference type="InterPro" id="IPR003133">
    <property type="entry name" value="T_Ag_DNA-bd"/>
</dbReference>
<dbReference type="InterPro" id="IPR017910">
    <property type="entry name" value="Znf_lg_T-Ag_D1-typ"/>
</dbReference>
<dbReference type="InterPro" id="IPR037102">
    <property type="entry name" value="Znf_lg_T-Ag_D1_dom_sf"/>
</dbReference>
<dbReference type="Pfam" id="PF06431">
    <property type="entry name" value="Polyoma_lg_T_C"/>
    <property type="match status" value="1"/>
</dbReference>
<dbReference type="Pfam" id="PF02217">
    <property type="entry name" value="T_Ag_DNA_bind"/>
    <property type="match status" value="1"/>
</dbReference>
<dbReference type="SMART" id="SM00271">
    <property type="entry name" value="DnaJ"/>
    <property type="match status" value="1"/>
</dbReference>
<dbReference type="SUPFAM" id="SSF46565">
    <property type="entry name" value="Chaperone J-domain"/>
    <property type="match status" value="1"/>
</dbReference>
<dbReference type="SUPFAM" id="SSF55464">
    <property type="entry name" value="Origin of replication-binding domain, RBD-like"/>
    <property type="match status" value="1"/>
</dbReference>
<dbReference type="SUPFAM" id="SSF52540">
    <property type="entry name" value="P-loop containing nucleoside triphosphate hydrolases"/>
    <property type="match status" value="1"/>
</dbReference>
<dbReference type="PROSITE" id="PS51206">
    <property type="entry name" value="SF3_HELICASE_1"/>
    <property type="match status" value="1"/>
</dbReference>
<dbReference type="PROSITE" id="PS51287">
    <property type="entry name" value="T_AG_OBD"/>
    <property type="match status" value="1"/>
</dbReference>
<dbReference type="PROSITE" id="PS51341">
    <property type="entry name" value="ZF_LTAG_D1"/>
    <property type="match status" value="1"/>
</dbReference>
<feature type="chain" id="PRO_0000115044" description="Large T antigen">
    <location>
        <begin position="1"/>
        <end position="777"/>
    </location>
</feature>
<feature type="domain" description="J">
    <location>
        <begin position="12"/>
        <end position="75"/>
    </location>
</feature>
<feature type="domain" description="SF3 helicase" evidence="2">
    <location>
        <begin position="544"/>
        <end position="704"/>
    </location>
</feature>
<feature type="DNA-binding region" description="T-ag OBD" evidence="3">
    <location>
        <begin position="288"/>
        <end position="402"/>
    </location>
</feature>
<feature type="zinc finger region" description="T-ag D1-type" evidence="4">
    <location>
        <begin position="411"/>
        <end position="505"/>
    </location>
</feature>
<feature type="region of interest" description="Disordered" evidence="5">
    <location>
        <begin position="140"/>
        <end position="287"/>
    </location>
</feature>
<feature type="short sequence motif" description="LXCXE motif" evidence="1">
    <location>
        <begin position="137"/>
        <end position="141"/>
    </location>
</feature>
<feature type="short sequence motif" description="Nuclear localization signal" evidence="1">
    <location>
        <begin position="274"/>
        <end position="281"/>
    </location>
</feature>
<feature type="compositionally biased region" description="Gly residues" evidence="5">
    <location>
        <begin position="194"/>
        <end position="204"/>
    </location>
</feature>
<feature type="compositionally biased region" description="Low complexity" evidence="5">
    <location>
        <begin position="228"/>
        <end position="242"/>
    </location>
</feature>
<feature type="compositionally biased region" description="Low complexity" evidence="5">
    <location>
        <begin position="259"/>
        <end position="269"/>
    </location>
</feature>
<feature type="binding site" evidence="4">
    <location>
        <position position="448"/>
    </location>
    <ligand>
        <name>Zn(2+)</name>
        <dbReference type="ChEBI" id="CHEBI:29105"/>
    </ligand>
</feature>
<feature type="binding site" evidence="4">
    <location>
        <position position="451"/>
    </location>
    <ligand>
        <name>Zn(2+)</name>
        <dbReference type="ChEBI" id="CHEBI:29105"/>
    </ligand>
</feature>
<feature type="binding site" evidence="4">
    <location>
        <position position="461"/>
    </location>
    <ligand>
        <name>Zn(2+)</name>
        <dbReference type="ChEBI" id="CHEBI:29105"/>
    </ligand>
</feature>
<feature type="binding site" evidence="4">
    <location>
        <position position="465"/>
    </location>
    <ligand>
        <name>Zn(2+)</name>
        <dbReference type="ChEBI" id="CHEBI:29105"/>
    </ligand>
</feature>
<feature type="binding site" evidence="2">
    <location>
        <begin position="570"/>
        <end position="577"/>
    </location>
    <ligand>
        <name>ATP</name>
        <dbReference type="ChEBI" id="CHEBI:30616"/>
    </ligand>
</feature>
<feature type="modified residue" description="N-acetylmethionine; by host" evidence="1">
    <location>
        <position position="1"/>
    </location>
</feature>
<feature type="modified residue" description="Phosphothreonine; by host" evidence="1">
    <location>
        <position position="273"/>
    </location>
</feature>